<sequence length="77" mass="8650">MATGIPASELRELSNEELTTRLKESKEELFNLRFQMATGQLTNNRRLSVVKKDIARIYTVLRERELGLSTNPGGDAA</sequence>
<comment type="similarity">
    <text evidence="1">Belongs to the universal ribosomal protein uL29 family.</text>
</comment>
<name>RL29_CORU7</name>
<keyword id="KW-1185">Reference proteome</keyword>
<keyword id="KW-0687">Ribonucleoprotein</keyword>
<keyword id="KW-0689">Ribosomal protein</keyword>
<gene>
    <name evidence="1" type="primary">rpmC</name>
    <name type="ordered locus">cu0323</name>
</gene>
<feature type="chain" id="PRO_1000121753" description="Large ribosomal subunit protein uL29">
    <location>
        <begin position="1"/>
        <end position="77"/>
    </location>
</feature>
<protein>
    <recommendedName>
        <fullName evidence="1">Large ribosomal subunit protein uL29</fullName>
    </recommendedName>
    <alternativeName>
        <fullName evidence="2">50S ribosomal protein L29</fullName>
    </alternativeName>
</protein>
<reference key="1">
    <citation type="journal article" date="2008" name="J. Biotechnol.">
        <title>The lifestyle of Corynebacterium urealyticum derived from its complete genome sequence established by pyrosequencing.</title>
        <authorList>
            <person name="Tauch A."/>
            <person name="Trost E."/>
            <person name="Tilker A."/>
            <person name="Ludewig U."/>
            <person name="Schneiker S."/>
            <person name="Goesmann A."/>
            <person name="Arnold W."/>
            <person name="Bekel T."/>
            <person name="Brinkrolf K."/>
            <person name="Brune I."/>
            <person name="Goetker S."/>
            <person name="Kalinowski J."/>
            <person name="Kamp P.-B."/>
            <person name="Lobo F.P."/>
            <person name="Viehoever P."/>
            <person name="Weisshaar B."/>
            <person name="Soriano F."/>
            <person name="Droege M."/>
            <person name="Puehler A."/>
        </authorList>
    </citation>
    <scope>NUCLEOTIDE SEQUENCE [LARGE SCALE GENOMIC DNA]</scope>
    <source>
        <strain>ATCC 43042 / DSM 7109</strain>
    </source>
</reference>
<evidence type="ECO:0000255" key="1">
    <source>
        <dbReference type="HAMAP-Rule" id="MF_00374"/>
    </source>
</evidence>
<evidence type="ECO:0000305" key="2"/>
<proteinExistence type="inferred from homology"/>
<accession>B1VEU4</accession>
<organism>
    <name type="scientific">Corynebacterium urealyticum (strain ATCC 43042 / DSM 7109)</name>
    <dbReference type="NCBI Taxonomy" id="504474"/>
    <lineage>
        <taxon>Bacteria</taxon>
        <taxon>Bacillati</taxon>
        <taxon>Actinomycetota</taxon>
        <taxon>Actinomycetes</taxon>
        <taxon>Mycobacteriales</taxon>
        <taxon>Corynebacteriaceae</taxon>
        <taxon>Corynebacterium</taxon>
    </lineage>
</organism>
<dbReference type="EMBL" id="AM942444">
    <property type="protein sequence ID" value="CAQ04283.1"/>
    <property type="molecule type" value="Genomic_DNA"/>
</dbReference>
<dbReference type="RefSeq" id="WP_012359583.1">
    <property type="nucleotide sequence ID" value="NC_010545.1"/>
</dbReference>
<dbReference type="SMR" id="B1VEU4"/>
<dbReference type="STRING" id="504474.cu0323"/>
<dbReference type="GeneID" id="60605126"/>
<dbReference type="KEGG" id="cur:cu0323"/>
<dbReference type="eggNOG" id="COG0255">
    <property type="taxonomic scope" value="Bacteria"/>
</dbReference>
<dbReference type="HOGENOM" id="CLU_158491_3_3_11"/>
<dbReference type="Proteomes" id="UP000001727">
    <property type="component" value="Chromosome"/>
</dbReference>
<dbReference type="GO" id="GO:0022625">
    <property type="term" value="C:cytosolic large ribosomal subunit"/>
    <property type="evidence" value="ECO:0007669"/>
    <property type="project" value="TreeGrafter"/>
</dbReference>
<dbReference type="GO" id="GO:0003735">
    <property type="term" value="F:structural constituent of ribosome"/>
    <property type="evidence" value="ECO:0007669"/>
    <property type="project" value="InterPro"/>
</dbReference>
<dbReference type="GO" id="GO:0006412">
    <property type="term" value="P:translation"/>
    <property type="evidence" value="ECO:0007669"/>
    <property type="project" value="UniProtKB-UniRule"/>
</dbReference>
<dbReference type="CDD" id="cd00427">
    <property type="entry name" value="Ribosomal_L29_HIP"/>
    <property type="match status" value="1"/>
</dbReference>
<dbReference type="FunFam" id="1.10.287.310:FF:000001">
    <property type="entry name" value="50S ribosomal protein L29"/>
    <property type="match status" value="1"/>
</dbReference>
<dbReference type="Gene3D" id="1.10.287.310">
    <property type="match status" value="1"/>
</dbReference>
<dbReference type="HAMAP" id="MF_00374">
    <property type="entry name" value="Ribosomal_uL29"/>
    <property type="match status" value="1"/>
</dbReference>
<dbReference type="InterPro" id="IPR050063">
    <property type="entry name" value="Ribosomal_protein_uL29"/>
</dbReference>
<dbReference type="InterPro" id="IPR001854">
    <property type="entry name" value="Ribosomal_uL29"/>
</dbReference>
<dbReference type="InterPro" id="IPR018254">
    <property type="entry name" value="Ribosomal_uL29_CS"/>
</dbReference>
<dbReference type="InterPro" id="IPR036049">
    <property type="entry name" value="Ribosomal_uL29_sf"/>
</dbReference>
<dbReference type="NCBIfam" id="TIGR00012">
    <property type="entry name" value="L29"/>
    <property type="match status" value="1"/>
</dbReference>
<dbReference type="PANTHER" id="PTHR10916">
    <property type="entry name" value="60S RIBOSOMAL PROTEIN L35/50S RIBOSOMAL PROTEIN L29"/>
    <property type="match status" value="1"/>
</dbReference>
<dbReference type="PANTHER" id="PTHR10916:SF0">
    <property type="entry name" value="LARGE RIBOSOMAL SUBUNIT PROTEIN UL29C"/>
    <property type="match status" value="1"/>
</dbReference>
<dbReference type="Pfam" id="PF00831">
    <property type="entry name" value="Ribosomal_L29"/>
    <property type="match status" value="1"/>
</dbReference>
<dbReference type="SUPFAM" id="SSF46561">
    <property type="entry name" value="Ribosomal protein L29 (L29p)"/>
    <property type="match status" value="1"/>
</dbReference>
<dbReference type="PROSITE" id="PS00579">
    <property type="entry name" value="RIBOSOMAL_L29"/>
    <property type="match status" value="1"/>
</dbReference>